<proteinExistence type="evidence at protein level"/>
<name>SEPT2_RAT</name>
<organism>
    <name type="scientific">Rattus norvegicus</name>
    <name type="common">Rat</name>
    <dbReference type="NCBI Taxonomy" id="10116"/>
    <lineage>
        <taxon>Eukaryota</taxon>
        <taxon>Metazoa</taxon>
        <taxon>Chordata</taxon>
        <taxon>Craniata</taxon>
        <taxon>Vertebrata</taxon>
        <taxon>Euteleostomi</taxon>
        <taxon>Mammalia</taxon>
        <taxon>Eutheria</taxon>
        <taxon>Euarchontoglires</taxon>
        <taxon>Glires</taxon>
        <taxon>Rodentia</taxon>
        <taxon>Myomorpha</taxon>
        <taxon>Muroidea</taxon>
        <taxon>Muridae</taxon>
        <taxon>Murinae</taxon>
        <taxon>Rattus</taxon>
    </lineage>
</organism>
<protein>
    <recommendedName>
        <fullName>Septin-2</fullName>
    </recommendedName>
    <alternativeName>
        <fullName>Vascular endothelial cell specific protein 11</fullName>
    </alternativeName>
</protein>
<evidence type="ECO:0000250" key="1"/>
<evidence type="ECO:0000250" key="2">
    <source>
        <dbReference type="UniProtKB" id="P42208"/>
    </source>
</evidence>
<evidence type="ECO:0000250" key="3">
    <source>
        <dbReference type="UniProtKB" id="Q15019"/>
    </source>
</evidence>
<evidence type="ECO:0000255" key="4">
    <source>
        <dbReference type="PROSITE-ProRule" id="PRU01056"/>
    </source>
</evidence>
<evidence type="ECO:0000269" key="5">
    <source>
    </source>
</evidence>
<evidence type="ECO:0000312" key="6">
    <source>
        <dbReference type="RGD" id="620056"/>
    </source>
</evidence>
<evidence type="ECO:0007744" key="7">
    <source>
    </source>
</evidence>
<evidence type="ECO:0007744" key="8">
    <source>
    </source>
</evidence>
<keyword id="KW-0007">Acetylation</keyword>
<keyword id="KW-0131">Cell cycle</keyword>
<keyword id="KW-0132">Cell division</keyword>
<keyword id="KW-1003">Cell membrane</keyword>
<keyword id="KW-0966">Cell projection</keyword>
<keyword id="KW-0969">Cilium</keyword>
<keyword id="KW-0963">Cytoplasm</keyword>
<keyword id="KW-0206">Cytoskeleton</keyword>
<keyword id="KW-0221">Differentiation</keyword>
<keyword id="KW-0903">Direct protein sequencing</keyword>
<keyword id="KW-0282">Flagellum</keyword>
<keyword id="KW-0342">GTP-binding</keyword>
<keyword id="KW-0472">Membrane</keyword>
<keyword id="KW-0498">Mitosis</keyword>
<keyword id="KW-0547">Nucleotide-binding</keyword>
<keyword id="KW-0597">Phosphoprotein</keyword>
<keyword id="KW-1185">Reference proteome</keyword>
<keyword id="KW-0744">Spermatogenesis</keyword>
<sequence>MSKQQPTQFINPETPGYVGFANLPNQVHRKSVKKGFEFTLMVVGESGLGKSTLINSLFLTDLYPERIIPGAAEKIERTVQIEASTVEIEERGVKLRLTVVDTPGYGDAINSRDCFKTIISYIDEQFERYLHDESGLNRRHIIDNRVHCCFYFISPFGHGLKPLDVAFMKAIHNKVNIVPVIAKADTLTLKERERLKKRILDEIEEHSIKIYHLPDAESDEDEDFKEQTRLLKASIPFSVVGSNQLIEAKGKKVRGRLYPWGVVEVENPEHNDFLKLRTMLITHMQDLQEVTQDLHYENFRSERLKRGGRKVENEDMNKDQILLEKEAELRRMQEMIARMQAQMQMQMQGGDTDSSTLGHHV</sequence>
<reference key="1">
    <citation type="submission" date="1999-05" db="EMBL/GenBank/DDBJ databases">
        <title>Identification of VESP11, a vascular endothelial cell specific protein.</title>
        <authorList>
            <person name="Aoki T."/>
            <person name="Toyoda H."/>
            <person name="Nishimoto S."/>
            <person name="Tawara J."/>
            <person name="Komurasak T."/>
        </authorList>
    </citation>
    <scope>NUCLEOTIDE SEQUENCE [MRNA]</scope>
    <source>
        <tissue>Liver</tissue>
    </source>
</reference>
<reference key="2">
    <citation type="journal article" date="2004" name="Genome Res.">
        <title>The status, quality, and expansion of the NIH full-length cDNA project: the Mammalian Gene Collection (MGC).</title>
        <authorList>
            <consortium name="The MGC Project Team"/>
        </authorList>
    </citation>
    <scope>NUCLEOTIDE SEQUENCE [LARGE SCALE MRNA]</scope>
    <source>
        <tissue>Lung</tissue>
    </source>
</reference>
<reference key="3">
    <citation type="submission" date="2006-11" db="UniProtKB">
        <authorList>
            <person name="Lubec G."/>
            <person name="Afjehi-Sadat L."/>
        </authorList>
    </citation>
    <scope>PROTEIN SEQUENCE OF 51-66 AND 117-139</scope>
    <scope>IDENTIFICATION BY MASS SPECTROMETRY</scope>
    <source>
        <strain>Sprague-Dawley</strain>
        <tissue>Spinal cord</tissue>
    </source>
</reference>
<reference key="4">
    <citation type="journal article" date="2004" name="J. Biol. Chem.">
        <title>Biochemical and cell biological analyses of a mammalian septin complex, Sept7/9b/11.</title>
        <authorList>
            <person name="Nagata K."/>
            <person name="Asano T."/>
            <person name="Nozawa Y."/>
            <person name="Inagaki M."/>
        </authorList>
    </citation>
    <scope>INTERACTION WITH SEPTIN7</scope>
</reference>
<reference key="5">
    <citation type="journal article" date="2006" name="Proc. Natl. Acad. Sci. U.S.A.">
        <title>Quantitative phosphoproteomics of vasopressin-sensitive renal cells: regulation of aquaporin-2 phosphorylation at two sites.</title>
        <authorList>
            <person name="Hoffert J.D."/>
            <person name="Pisitkun T."/>
            <person name="Wang G."/>
            <person name="Shen R.-F."/>
            <person name="Knepper M.A."/>
        </authorList>
    </citation>
    <scope>PHOSPHORYLATION [LARGE SCALE ANALYSIS] AT SER-218</scope>
    <scope>IDENTIFICATION BY MASS SPECTROMETRY [LARGE SCALE ANALYSIS]</scope>
</reference>
<reference key="6">
    <citation type="journal article" date="2012" name="Nat. Commun.">
        <title>Quantitative maps of protein phosphorylation sites across 14 different rat organs and tissues.</title>
        <authorList>
            <person name="Lundby A."/>
            <person name="Secher A."/>
            <person name="Lage K."/>
            <person name="Nordsborg N.B."/>
            <person name="Dmytriyev A."/>
            <person name="Lundby C."/>
            <person name="Olsen J.V."/>
        </authorList>
    </citation>
    <scope>PHOSPHORYLATION [LARGE SCALE ANALYSIS] AT SER-218</scope>
    <scope>IDENTIFICATION BY MASS SPECTROMETRY [LARGE SCALE ANALYSIS]</scope>
</reference>
<gene>
    <name evidence="3" type="primary">Septin2</name>
    <name evidence="6" type="synonym">Sept2</name>
    <name type="synonym">Vesp11</name>
</gene>
<comment type="function">
    <text evidence="1 3">Filament-forming cytoskeletal GTPase. Forms a filamentous structure with SEPTIN12, SEPTIN6, SEPTIN2 and probably SEPTIN4 at the sperm annulus which is required for the structural integrity and motility of the sperm tail during postmeiotic differentiation (By similarity). Required for normal organization of the actin cytoskeleton. Plays a role in the biogenesis of polarized columnar-shaped epithelium by maintaining polyglutamylated microtubules, thus facilitating efficient vesicle transport, and by impeding MAP4 binding to tubulin. Required for the progression through mitosis. Forms a scaffold at the midplane of the mitotic splindle required to maintain CENPE localization at kinetochores and consequently chromosome congression. During anaphase, may be required for chromosome segregation and spindle elongation. Plays a role in ciliogenesis and collective cell movements. In cilia, required for the integrity of the diffusion barrier at the base of the primary cilium that prevents diffusion of transmembrane proteins between the cilia and plasma membranes: probably acts by regulating the assembly of the tectonic-like complex (also named B9 complex) by localizing TMEM231 protein (By similarity).</text>
</comment>
<comment type="subunit">
    <text evidence="2 3 5">Septins polymerize into heterooligomeric protein complexes that form filaments, and associate with cellular membranes, actin filaments and microtubules (By similarity). GTPase activity is required for filament formation (By similarity). Septin filaments are assembled from asymmetrical heterotrimers, composed of SEPTIN2, SEPTIN6 and SEPTIN7 that associate head-to-head to form a hexameric unit (By similarity). Interaction between SEPTIN2 and SEPTIN7 seems indirect (PubMed:15485874). Also interacts with SEPTIN9 and SEPTIN5 (By similarity). Interaction with SEPTIN4 not detected (By similarity). Component of a septin core octameric complex consisting of SEPTIN12, SEPTIN7, SEPTIN6 and SEPTIN2 or SEPTIN4 in the order 12-7-6-2-2-6-7-12 or 12-7-6-4-4-6-7-12 and located in the sperm annulus (By similarity). Interacts with MAP4 (By similarity). Interacts with DZIP1L (By similarity).</text>
</comment>
<comment type="subcellular location">
    <subcellularLocation>
        <location evidence="1">Cytoplasm</location>
    </subcellularLocation>
    <subcellularLocation>
        <location evidence="1">Cytoplasm</location>
        <location evidence="1">Cytoskeleton</location>
    </subcellularLocation>
    <subcellularLocation>
        <location evidence="1">Cytoplasm</location>
        <location evidence="1">Cytoskeleton</location>
        <location evidence="1">Spindle</location>
    </subcellularLocation>
    <subcellularLocation>
        <location evidence="1">Cleavage furrow</location>
    </subcellularLocation>
    <subcellularLocation>
        <location evidence="1">Midbody</location>
    </subcellularLocation>
    <subcellularLocation>
        <location evidence="1">Cytoplasm</location>
        <location evidence="1">Cell cortex</location>
    </subcellularLocation>
    <subcellularLocation>
        <location evidence="1">Cell projection</location>
        <location evidence="1">Cilium membrane</location>
    </subcellularLocation>
    <subcellularLocation>
        <location evidence="3">Cell projection</location>
        <location evidence="3">Cilium</location>
        <location evidence="3">Flagellum</location>
    </subcellularLocation>
    <text evidence="1 3">In metaphase cells, localized within the microtubule spindle. At the metaphase plate, in close apposition to the kinetochores of the congressed chromosomes. In cells undergoing cytokinesis, localized to the midbody, the ingressing cleavage furrow, and the central spindle. Localizes at the base of the cilia near the morphological distinction between the cilia and plasma membranes. Found in the sperm annulus (By similarity).</text>
</comment>
<comment type="miscellaneous">
    <text evidence="1">Coordinated expression with SEPTIN2 and SEPTIN7.</text>
</comment>
<comment type="similarity">
    <text evidence="4">Belongs to the TRAFAC class TrmE-Era-EngA-EngB-Septin-like GTPase superfamily. Septin GTPase family.</text>
</comment>
<dbReference type="EMBL" id="AB027561">
    <property type="protein sequence ID" value="BAB47151.1"/>
    <property type="molecule type" value="mRNA"/>
</dbReference>
<dbReference type="EMBL" id="BC081745">
    <property type="protein sequence ID" value="AAH81745.1"/>
    <property type="molecule type" value="mRNA"/>
</dbReference>
<dbReference type="RefSeq" id="NP_476489.1">
    <property type="nucleotide sequence ID" value="NM_057148.2"/>
</dbReference>
<dbReference type="RefSeq" id="XP_006245574.1">
    <property type="nucleotide sequence ID" value="XM_006245512.3"/>
</dbReference>
<dbReference type="RefSeq" id="XP_006245576.1">
    <property type="nucleotide sequence ID" value="XM_006245514.3"/>
</dbReference>
<dbReference type="RefSeq" id="XP_038938892.1">
    <property type="nucleotide sequence ID" value="XM_039082964.2"/>
</dbReference>
<dbReference type="RefSeq" id="XP_038938893.1">
    <property type="nucleotide sequence ID" value="XM_039082965.2"/>
</dbReference>
<dbReference type="RefSeq" id="XP_063122655.1">
    <property type="nucleotide sequence ID" value="XM_063266585.1"/>
</dbReference>
<dbReference type="RefSeq" id="XP_063122656.1">
    <property type="nucleotide sequence ID" value="XM_063266586.1"/>
</dbReference>
<dbReference type="SMR" id="Q91Y81"/>
<dbReference type="BioGRID" id="250737">
    <property type="interactions" value="3"/>
</dbReference>
<dbReference type="CORUM" id="Q91Y81"/>
<dbReference type="FunCoup" id="Q91Y81">
    <property type="interactions" value="3989"/>
</dbReference>
<dbReference type="IntAct" id="Q91Y81">
    <property type="interactions" value="4"/>
</dbReference>
<dbReference type="MINT" id="Q91Y81"/>
<dbReference type="STRING" id="10116.ENSRNOP00000024261"/>
<dbReference type="iPTMnet" id="Q91Y81"/>
<dbReference type="PhosphoSitePlus" id="Q91Y81"/>
<dbReference type="jPOST" id="Q91Y81"/>
<dbReference type="PaxDb" id="10116-ENSRNOP00000024261"/>
<dbReference type="GeneID" id="117515"/>
<dbReference type="KEGG" id="rno:117515"/>
<dbReference type="UCSC" id="RGD:620056">
    <property type="organism name" value="rat"/>
</dbReference>
<dbReference type="AGR" id="RGD:620056"/>
<dbReference type="CTD" id="4735"/>
<dbReference type="RGD" id="620056">
    <property type="gene designation" value="Septin2"/>
</dbReference>
<dbReference type="VEuPathDB" id="HostDB:ENSRNOG00000017952"/>
<dbReference type="eggNOG" id="KOG2655">
    <property type="taxonomic scope" value="Eukaryota"/>
</dbReference>
<dbReference type="HOGENOM" id="CLU_017718_0_0_1"/>
<dbReference type="InParanoid" id="Q91Y81"/>
<dbReference type="PhylomeDB" id="Q91Y81"/>
<dbReference type="TreeFam" id="TF101079"/>
<dbReference type="Reactome" id="R-RNO-5620912">
    <property type="pathway name" value="Anchoring of the basal body to the plasma membrane"/>
</dbReference>
<dbReference type="PRO" id="PR:Q91Y81"/>
<dbReference type="Proteomes" id="UP000002494">
    <property type="component" value="Chromosome 9"/>
</dbReference>
<dbReference type="Bgee" id="ENSRNOG00000017952">
    <property type="expression patterns" value="Expressed in lung and 20 other cell types or tissues"/>
</dbReference>
<dbReference type="GO" id="GO:0005930">
    <property type="term" value="C:axoneme"/>
    <property type="evidence" value="ECO:0000266"/>
    <property type="project" value="RGD"/>
</dbReference>
<dbReference type="GO" id="GO:0032153">
    <property type="term" value="C:cell division site"/>
    <property type="evidence" value="ECO:0000318"/>
    <property type="project" value="GO_Central"/>
</dbReference>
<dbReference type="GO" id="GO:0042995">
    <property type="term" value="C:cell projection"/>
    <property type="evidence" value="ECO:0000266"/>
    <property type="project" value="RGD"/>
</dbReference>
<dbReference type="GO" id="GO:0009986">
    <property type="term" value="C:cell surface"/>
    <property type="evidence" value="ECO:0000266"/>
    <property type="project" value="RGD"/>
</dbReference>
<dbReference type="GO" id="GO:0060170">
    <property type="term" value="C:ciliary membrane"/>
    <property type="evidence" value="ECO:0000250"/>
    <property type="project" value="UniProtKB"/>
</dbReference>
<dbReference type="GO" id="GO:0035869">
    <property type="term" value="C:ciliary transition zone"/>
    <property type="evidence" value="ECO:0000266"/>
    <property type="project" value="RGD"/>
</dbReference>
<dbReference type="GO" id="GO:0032154">
    <property type="term" value="C:cleavage furrow"/>
    <property type="evidence" value="ECO:0007669"/>
    <property type="project" value="UniProtKB-SubCell"/>
</dbReference>
<dbReference type="GO" id="GO:0005737">
    <property type="term" value="C:cytoplasm"/>
    <property type="evidence" value="ECO:0000266"/>
    <property type="project" value="RGD"/>
</dbReference>
<dbReference type="GO" id="GO:0000145">
    <property type="term" value="C:exocyst"/>
    <property type="evidence" value="ECO:0000314"/>
    <property type="project" value="RGD"/>
</dbReference>
<dbReference type="GO" id="GO:0015630">
    <property type="term" value="C:microtubule cytoskeleton"/>
    <property type="evidence" value="ECO:0000318"/>
    <property type="project" value="GO_Central"/>
</dbReference>
<dbReference type="GO" id="GO:0030496">
    <property type="term" value="C:midbody"/>
    <property type="evidence" value="ECO:0007669"/>
    <property type="project" value="UniProtKB-SubCell"/>
</dbReference>
<dbReference type="GO" id="GO:0097730">
    <property type="term" value="C:non-motile cilium"/>
    <property type="evidence" value="ECO:0000266"/>
    <property type="project" value="RGD"/>
</dbReference>
<dbReference type="GO" id="GO:0005634">
    <property type="term" value="C:nucleus"/>
    <property type="evidence" value="ECO:0000266"/>
    <property type="project" value="RGD"/>
</dbReference>
<dbReference type="GO" id="GO:0048471">
    <property type="term" value="C:perinuclear region of cytoplasm"/>
    <property type="evidence" value="ECO:0000314"/>
    <property type="project" value="RGD"/>
</dbReference>
<dbReference type="GO" id="GO:0032391">
    <property type="term" value="C:photoreceptor connecting cilium"/>
    <property type="evidence" value="ECO:0000266"/>
    <property type="project" value="RGD"/>
</dbReference>
<dbReference type="GO" id="GO:0005886">
    <property type="term" value="C:plasma membrane"/>
    <property type="evidence" value="ECO:0000266"/>
    <property type="project" value="RGD"/>
</dbReference>
<dbReference type="GO" id="GO:0098793">
    <property type="term" value="C:presynapse"/>
    <property type="evidence" value="ECO:0000314"/>
    <property type="project" value="SynGO"/>
</dbReference>
<dbReference type="GO" id="GO:0031105">
    <property type="term" value="C:septin complex"/>
    <property type="evidence" value="ECO:0000266"/>
    <property type="project" value="RGD"/>
</dbReference>
<dbReference type="GO" id="GO:0005940">
    <property type="term" value="C:septin ring"/>
    <property type="evidence" value="ECO:0000318"/>
    <property type="project" value="GO_Central"/>
</dbReference>
<dbReference type="GO" id="GO:0097227">
    <property type="term" value="C:sperm annulus"/>
    <property type="evidence" value="ECO:0000266"/>
    <property type="project" value="RGD"/>
</dbReference>
<dbReference type="GO" id="GO:0005819">
    <property type="term" value="C:spindle"/>
    <property type="evidence" value="ECO:0007669"/>
    <property type="project" value="UniProtKB-SubCell"/>
</dbReference>
<dbReference type="GO" id="GO:0045202">
    <property type="term" value="C:synapse"/>
    <property type="evidence" value="ECO:0000266"/>
    <property type="project" value="RGD"/>
</dbReference>
<dbReference type="GO" id="GO:0030234">
    <property type="term" value="F:enzyme regulator activity"/>
    <property type="evidence" value="ECO:0000266"/>
    <property type="project" value="RGD"/>
</dbReference>
<dbReference type="GO" id="GO:0005525">
    <property type="term" value="F:GTP binding"/>
    <property type="evidence" value="ECO:0007669"/>
    <property type="project" value="UniProtKB-KW"/>
</dbReference>
<dbReference type="GO" id="GO:0003924">
    <property type="term" value="F:GTPase activity"/>
    <property type="evidence" value="ECO:0000318"/>
    <property type="project" value="GO_Central"/>
</dbReference>
<dbReference type="GO" id="GO:0060090">
    <property type="term" value="F:molecular adaptor activity"/>
    <property type="evidence" value="ECO:0000318"/>
    <property type="project" value="GO_Central"/>
</dbReference>
<dbReference type="GO" id="GO:0060271">
    <property type="term" value="P:cilium assembly"/>
    <property type="evidence" value="ECO:0000250"/>
    <property type="project" value="UniProtKB"/>
</dbReference>
<dbReference type="GO" id="GO:0061640">
    <property type="term" value="P:cytoskeleton-dependent cytokinesis"/>
    <property type="evidence" value="ECO:0000318"/>
    <property type="project" value="GO_Central"/>
</dbReference>
<dbReference type="GO" id="GO:0031175">
    <property type="term" value="P:neuron projection development"/>
    <property type="evidence" value="ECO:0000315"/>
    <property type="project" value="RGD"/>
</dbReference>
<dbReference type="GO" id="GO:0008104">
    <property type="term" value="P:protein localization"/>
    <property type="evidence" value="ECO:0000318"/>
    <property type="project" value="GO_Central"/>
</dbReference>
<dbReference type="GO" id="GO:0002036">
    <property type="term" value="P:regulation of L-glutamate import across plasma membrane"/>
    <property type="evidence" value="ECO:0000266"/>
    <property type="project" value="RGD"/>
</dbReference>
<dbReference type="GO" id="GO:0032880">
    <property type="term" value="P:regulation of protein localization"/>
    <property type="evidence" value="ECO:0000266"/>
    <property type="project" value="RGD"/>
</dbReference>
<dbReference type="GO" id="GO:0007224">
    <property type="term" value="P:smoothened signaling pathway"/>
    <property type="evidence" value="ECO:0000250"/>
    <property type="project" value="UniProtKB"/>
</dbReference>
<dbReference type="GO" id="GO:0007283">
    <property type="term" value="P:spermatogenesis"/>
    <property type="evidence" value="ECO:0007669"/>
    <property type="project" value="UniProtKB-KW"/>
</dbReference>
<dbReference type="CDD" id="cd01850">
    <property type="entry name" value="CDC_Septin"/>
    <property type="match status" value="1"/>
</dbReference>
<dbReference type="FunFam" id="3.40.50.300:FF:000064">
    <property type="entry name" value="Septin 4"/>
    <property type="match status" value="1"/>
</dbReference>
<dbReference type="Gene3D" id="3.40.50.300">
    <property type="entry name" value="P-loop containing nucleotide triphosphate hydrolases"/>
    <property type="match status" value="1"/>
</dbReference>
<dbReference type="InterPro" id="IPR030379">
    <property type="entry name" value="G_SEPTIN_dom"/>
</dbReference>
<dbReference type="InterPro" id="IPR027417">
    <property type="entry name" value="P-loop_NTPase"/>
</dbReference>
<dbReference type="InterPro" id="IPR016491">
    <property type="entry name" value="Septin"/>
</dbReference>
<dbReference type="InterPro" id="IPR008113">
    <property type="entry name" value="Septin2"/>
</dbReference>
<dbReference type="PANTHER" id="PTHR18884">
    <property type="entry name" value="SEPTIN"/>
    <property type="match status" value="1"/>
</dbReference>
<dbReference type="Pfam" id="PF00735">
    <property type="entry name" value="Septin"/>
    <property type="match status" value="1"/>
</dbReference>
<dbReference type="PIRSF" id="PIRSF006698">
    <property type="entry name" value="Septin"/>
    <property type="match status" value="1"/>
</dbReference>
<dbReference type="PRINTS" id="PR01740">
    <property type="entry name" value="SEPTIN2"/>
</dbReference>
<dbReference type="SUPFAM" id="SSF52540">
    <property type="entry name" value="P-loop containing nucleoside triphosphate hydrolases"/>
    <property type="match status" value="1"/>
</dbReference>
<dbReference type="PROSITE" id="PS51719">
    <property type="entry name" value="G_SEPTIN"/>
    <property type="match status" value="1"/>
</dbReference>
<feature type="chain" id="PRO_0000270208" description="Septin-2">
    <location>
        <begin position="1"/>
        <end position="361"/>
    </location>
</feature>
<feature type="domain" description="Septin-type G" evidence="4">
    <location>
        <begin position="34"/>
        <end position="306"/>
    </location>
</feature>
<feature type="region of interest" description="G1 motif" evidence="4">
    <location>
        <begin position="44"/>
        <end position="51"/>
    </location>
</feature>
<feature type="region of interest" description="G3 motif" evidence="4">
    <location>
        <begin position="101"/>
        <end position="104"/>
    </location>
</feature>
<feature type="region of interest" description="G4 motif" evidence="4">
    <location>
        <begin position="182"/>
        <end position="185"/>
    </location>
</feature>
<feature type="region of interest" description="Important for dimerization" evidence="1">
    <location>
        <begin position="260"/>
        <end position="270"/>
    </location>
</feature>
<feature type="binding site" evidence="1">
    <location>
        <begin position="44"/>
        <end position="51"/>
    </location>
    <ligand>
        <name>GTP</name>
        <dbReference type="ChEBI" id="CHEBI:37565"/>
    </ligand>
</feature>
<feature type="binding site" evidence="1">
    <location>
        <position position="78"/>
    </location>
    <ligand>
        <name>GTP</name>
        <dbReference type="ChEBI" id="CHEBI:37565"/>
    </ligand>
</feature>
<feature type="binding site" evidence="1">
    <location>
        <position position="104"/>
    </location>
    <ligand>
        <name>GTP</name>
        <dbReference type="ChEBI" id="CHEBI:37565"/>
    </ligand>
</feature>
<feature type="binding site" evidence="1">
    <location>
        <begin position="183"/>
        <end position="191"/>
    </location>
    <ligand>
        <name>GTP</name>
        <dbReference type="ChEBI" id="CHEBI:37565"/>
    </ligand>
</feature>
<feature type="binding site" evidence="1">
    <location>
        <position position="241"/>
    </location>
    <ligand>
        <name>GTP</name>
        <dbReference type="ChEBI" id="CHEBI:37565"/>
    </ligand>
</feature>
<feature type="binding site" evidence="1">
    <location>
        <position position="256"/>
    </location>
    <ligand>
        <name>GTP</name>
        <dbReference type="ChEBI" id="CHEBI:37565"/>
    </ligand>
</feature>
<feature type="site" description="Important for dimerization" evidence="1">
    <location>
        <position position="156"/>
    </location>
</feature>
<feature type="modified residue" description="Phosphotyrosine" evidence="2">
    <location>
        <position position="17"/>
    </location>
</feature>
<feature type="modified residue" description="N6-acetyllysine" evidence="3">
    <location>
        <position position="190"/>
    </location>
</feature>
<feature type="modified residue" description="Phosphotyrosine" evidence="3">
    <location>
        <position position="211"/>
    </location>
</feature>
<feature type="modified residue" description="Phosphoserine" evidence="7 8">
    <location>
        <position position="218"/>
    </location>
</feature>
<accession>Q91Y81</accession>